<evidence type="ECO:0000255" key="1"/>
<evidence type="ECO:0000255" key="2">
    <source>
        <dbReference type="PROSITE-ProRule" id="PRU00806"/>
    </source>
</evidence>
<evidence type="ECO:0000305" key="3"/>
<gene>
    <name type="primary">CRRSP51</name>
    <name type="ordered locus">At4g20560</name>
    <name type="ORF">F9F13.210</name>
</gene>
<keyword id="KW-1185">Reference proteome</keyword>
<keyword id="KW-0677">Repeat</keyword>
<keyword id="KW-0964">Secreted</keyword>
<keyword id="KW-0732">Signal</keyword>
<dbReference type="EMBL" id="AL080253">
    <property type="protein sequence ID" value="CAB45822.1"/>
    <property type="status" value="ALT_SEQ"/>
    <property type="molecule type" value="Genomic_DNA"/>
</dbReference>
<dbReference type="EMBL" id="AL161553">
    <property type="protein sequence ID" value="CAB79056.1"/>
    <property type="status" value="ALT_SEQ"/>
    <property type="molecule type" value="Genomic_DNA"/>
</dbReference>
<dbReference type="EMBL" id="CP002687">
    <property type="status" value="NOT_ANNOTATED_CDS"/>
    <property type="molecule type" value="Genomic_DNA"/>
</dbReference>
<dbReference type="PIR" id="T10595">
    <property type="entry name" value="T10595"/>
</dbReference>
<dbReference type="RefSeq" id="NP_001320013.1">
    <property type="nucleotide sequence ID" value="NM_001341449.1"/>
</dbReference>
<dbReference type="RefSeq" id="NP_567608.3">
    <property type="nucleotide sequence ID" value="NM_118177.3"/>
</dbReference>
<dbReference type="RefSeq" id="NP_567609.3">
    <property type="nucleotide sequence ID" value="NM_118178.3"/>
</dbReference>
<dbReference type="RefSeq" id="NP_567610.3">
    <property type="nucleotide sequence ID" value="NM_118179.3"/>
</dbReference>
<dbReference type="RefSeq" id="NP_567611.3">
    <property type="nucleotide sequence ID" value="NM_118180.3"/>
</dbReference>
<dbReference type="RefSeq" id="NP_567612.3">
    <property type="nucleotide sequence ID" value="NM_118181.3"/>
</dbReference>
<dbReference type="RefSeq" id="NP_567614.3">
    <property type="nucleotide sequence ID" value="NM_118183.3"/>
</dbReference>
<dbReference type="SMR" id="P0CJ58"/>
<dbReference type="EnsemblPlants" id="AT4G20580.1">
    <property type="protein sequence ID" value="AT4G20580.1"/>
    <property type="gene ID" value="AT4G20580"/>
</dbReference>
<dbReference type="EnsemblPlants" id="AT4G20590.1">
    <property type="protein sequence ID" value="AT4G20590.1"/>
    <property type="gene ID" value="AT4G20590"/>
</dbReference>
<dbReference type="EnsemblPlants" id="AT4G20600.1">
    <property type="protein sequence ID" value="AT4G20600.1"/>
    <property type="gene ID" value="AT4G20600"/>
</dbReference>
<dbReference type="EnsemblPlants" id="AT4G20610.1">
    <property type="protein sequence ID" value="AT4G20610.1"/>
    <property type="gene ID" value="AT4G20610"/>
</dbReference>
<dbReference type="EnsemblPlants" id="AT4G20620.1">
    <property type="protein sequence ID" value="AT4G20620.1"/>
    <property type="gene ID" value="AT4G20620"/>
</dbReference>
<dbReference type="EnsemblPlants" id="AT4G20630.1">
    <property type="protein sequence ID" value="AT4G20630.1"/>
    <property type="gene ID" value="AT4G20630"/>
</dbReference>
<dbReference type="EnsemblPlants" id="AT4G20640.1">
    <property type="protein sequence ID" value="AT4G20640.1"/>
    <property type="gene ID" value="AT4G20640"/>
</dbReference>
<dbReference type="Gramene" id="AT4G20580.1">
    <property type="protein sequence ID" value="AT4G20580.1"/>
    <property type="gene ID" value="AT4G20580"/>
</dbReference>
<dbReference type="Gramene" id="AT4G20590.1">
    <property type="protein sequence ID" value="AT4G20590.1"/>
    <property type="gene ID" value="AT4G20590"/>
</dbReference>
<dbReference type="Gramene" id="AT4G20600.1">
    <property type="protein sequence ID" value="AT4G20600.1"/>
    <property type="gene ID" value="AT4G20600"/>
</dbReference>
<dbReference type="Gramene" id="AT4G20610.1">
    <property type="protein sequence ID" value="AT4G20610.1"/>
    <property type="gene ID" value="AT4G20610"/>
</dbReference>
<dbReference type="Gramene" id="AT4G20620.1">
    <property type="protein sequence ID" value="AT4G20620.1"/>
    <property type="gene ID" value="AT4G20620"/>
</dbReference>
<dbReference type="Gramene" id="AT4G20630.1">
    <property type="protein sequence ID" value="AT4G20630.1"/>
    <property type="gene ID" value="AT4G20630"/>
</dbReference>
<dbReference type="Gramene" id="AT4G20640.1">
    <property type="protein sequence ID" value="AT4G20640.1"/>
    <property type="gene ID" value="AT4G20640"/>
</dbReference>
<dbReference type="KEGG" id="ath:AT4G20580"/>
<dbReference type="KEGG" id="ath:AT4G20590"/>
<dbReference type="KEGG" id="ath:AT4G20600"/>
<dbReference type="KEGG" id="ath:AT4G20610"/>
<dbReference type="KEGG" id="ath:AT4G20620"/>
<dbReference type="KEGG" id="ath:AT4G20630"/>
<dbReference type="KEGG" id="ath:AT4G20640"/>
<dbReference type="Araport" id="AT4G20560"/>
<dbReference type="TAIR" id="AT4G20560"/>
<dbReference type="HOGENOM" id="CLU_000288_35_0_1"/>
<dbReference type="InParanoid" id="P0CJ58"/>
<dbReference type="OMA" id="FIQVWNI"/>
<dbReference type="PRO" id="PR:P0CJ58"/>
<dbReference type="Proteomes" id="UP000006548">
    <property type="component" value="Chromosome 4"/>
</dbReference>
<dbReference type="ExpressionAtlas" id="P0CJ58">
    <property type="expression patterns" value="baseline"/>
</dbReference>
<dbReference type="GO" id="GO:0005576">
    <property type="term" value="C:extracellular region"/>
    <property type="evidence" value="ECO:0007669"/>
    <property type="project" value="UniProtKB-SubCell"/>
</dbReference>
<dbReference type="CDD" id="cd23509">
    <property type="entry name" value="Gnk2-like"/>
    <property type="match status" value="2"/>
</dbReference>
<dbReference type="FunFam" id="3.30.430.20:FF:000002">
    <property type="entry name" value="Cysteine-rich receptor-like protein kinase 10"/>
    <property type="match status" value="1"/>
</dbReference>
<dbReference type="Gene3D" id="3.30.430.20">
    <property type="entry name" value="Gnk2 domain, C-X8-C-X2-C motif"/>
    <property type="match status" value="2"/>
</dbReference>
<dbReference type="InterPro" id="IPR050581">
    <property type="entry name" value="CRR_secretory_protein"/>
</dbReference>
<dbReference type="InterPro" id="IPR002902">
    <property type="entry name" value="GNK2"/>
</dbReference>
<dbReference type="InterPro" id="IPR038408">
    <property type="entry name" value="GNK2_sf"/>
</dbReference>
<dbReference type="PANTHER" id="PTHR32411:SF54">
    <property type="entry name" value="CYSTEINE-RICH REPEAT SECRETORY PROTEIN 29-RELATED"/>
    <property type="match status" value="1"/>
</dbReference>
<dbReference type="PANTHER" id="PTHR32411">
    <property type="entry name" value="CYSTEINE-RICH REPEAT SECRETORY PROTEIN 38-RELATED"/>
    <property type="match status" value="1"/>
</dbReference>
<dbReference type="Pfam" id="PF01657">
    <property type="entry name" value="Stress-antifung"/>
    <property type="match status" value="2"/>
</dbReference>
<dbReference type="PROSITE" id="PS51473">
    <property type="entry name" value="GNK2"/>
    <property type="match status" value="2"/>
</dbReference>
<feature type="signal peptide" evidence="1">
    <location>
        <begin position="1"/>
        <end position="26"/>
    </location>
</feature>
<feature type="chain" id="PRO_0000403947" description="Cysteine-rich repeat secretory protein 51">
    <location>
        <begin position="27"/>
        <end position="256"/>
    </location>
</feature>
<feature type="domain" description="Gnk2-homologous 1" evidence="2">
    <location>
        <begin position="33"/>
        <end position="136"/>
    </location>
</feature>
<feature type="domain" description="Gnk2-homologous 2" evidence="2">
    <location>
        <begin position="142"/>
        <end position="253"/>
    </location>
</feature>
<comment type="subcellular location">
    <subcellularLocation>
        <location evidence="3">Secreted</location>
    </subcellularLocation>
</comment>
<comment type="similarity">
    <text evidence="3">Belongs to the cysteine-rich repeat secretory protein family.</text>
</comment>
<comment type="sequence caution" evidence="3">
    <conflict type="erroneous gene model prediction">
        <sequence resource="EMBL-CDS" id="CAB45822"/>
    </conflict>
</comment>
<comment type="sequence caution" evidence="3">
    <conflict type="erroneous gene model prediction">
        <sequence resource="EMBL-CDS" id="CAB79056"/>
    </conflict>
</comment>
<reference key="1">
    <citation type="journal article" date="1999" name="Nature">
        <title>Sequence and analysis of chromosome 4 of the plant Arabidopsis thaliana.</title>
        <authorList>
            <person name="Mayer K.F.X."/>
            <person name="Schueller C."/>
            <person name="Wambutt R."/>
            <person name="Murphy G."/>
            <person name="Volckaert G."/>
            <person name="Pohl T."/>
            <person name="Duesterhoeft A."/>
            <person name="Stiekema W."/>
            <person name="Entian K.-D."/>
            <person name="Terryn N."/>
            <person name="Harris B."/>
            <person name="Ansorge W."/>
            <person name="Brandt P."/>
            <person name="Grivell L.A."/>
            <person name="Rieger M."/>
            <person name="Weichselgartner M."/>
            <person name="de Simone V."/>
            <person name="Obermaier B."/>
            <person name="Mache R."/>
            <person name="Mueller M."/>
            <person name="Kreis M."/>
            <person name="Delseny M."/>
            <person name="Puigdomenech P."/>
            <person name="Watson M."/>
            <person name="Schmidtheini T."/>
            <person name="Reichert B."/>
            <person name="Portetelle D."/>
            <person name="Perez-Alonso M."/>
            <person name="Boutry M."/>
            <person name="Bancroft I."/>
            <person name="Vos P."/>
            <person name="Hoheisel J."/>
            <person name="Zimmermann W."/>
            <person name="Wedler H."/>
            <person name="Ridley P."/>
            <person name="Langham S.-A."/>
            <person name="McCullagh B."/>
            <person name="Bilham L."/>
            <person name="Robben J."/>
            <person name="van der Schueren J."/>
            <person name="Grymonprez B."/>
            <person name="Chuang Y.-J."/>
            <person name="Vandenbussche F."/>
            <person name="Braeken M."/>
            <person name="Weltjens I."/>
            <person name="Voet M."/>
            <person name="Bastiaens I."/>
            <person name="Aert R."/>
            <person name="Defoor E."/>
            <person name="Weitzenegger T."/>
            <person name="Bothe G."/>
            <person name="Ramsperger U."/>
            <person name="Hilbert H."/>
            <person name="Braun M."/>
            <person name="Holzer E."/>
            <person name="Brandt A."/>
            <person name="Peters S."/>
            <person name="van Staveren M."/>
            <person name="Dirkse W."/>
            <person name="Mooijman P."/>
            <person name="Klein Lankhorst R."/>
            <person name="Rose M."/>
            <person name="Hauf J."/>
            <person name="Koetter P."/>
            <person name="Berneiser S."/>
            <person name="Hempel S."/>
            <person name="Feldpausch M."/>
            <person name="Lamberth S."/>
            <person name="Van den Daele H."/>
            <person name="De Keyser A."/>
            <person name="Buysshaert C."/>
            <person name="Gielen J."/>
            <person name="Villarroel R."/>
            <person name="De Clercq R."/>
            <person name="van Montagu M."/>
            <person name="Rogers J."/>
            <person name="Cronin A."/>
            <person name="Quail M.A."/>
            <person name="Bray-Allen S."/>
            <person name="Clark L."/>
            <person name="Doggett J."/>
            <person name="Hall S."/>
            <person name="Kay M."/>
            <person name="Lennard N."/>
            <person name="McLay K."/>
            <person name="Mayes R."/>
            <person name="Pettett A."/>
            <person name="Rajandream M.A."/>
            <person name="Lyne M."/>
            <person name="Benes V."/>
            <person name="Rechmann S."/>
            <person name="Borkova D."/>
            <person name="Bloecker H."/>
            <person name="Scharfe M."/>
            <person name="Grimm M."/>
            <person name="Loehnert T.-H."/>
            <person name="Dose S."/>
            <person name="de Haan M."/>
            <person name="Maarse A.C."/>
            <person name="Schaefer M."/>
            <person name="Mueller-Auer S."/>
            <person name="Gabel C."/>
            <person name="Fuchs M."/>
            <person name="Fartmann B."/>
            <person name="Granderath K."/>
            <person name="Dauner D."/>
            <person name="Herzl A."/>
            <person name="Neumann S."/>
            <person name="Argiriou A."/>
            <person name="Vitale D."/>
            <person name="Liguori R."/>
            <person name="Piravandi E."/>
            <person name="Massenet O."/>
            <person name="Quigley F."/>
            <person name="Clabauld G."/>
            <person name="Muendlein A."/>
            <person name="Felber R."/>
            <person name="Schnabl S."/>
            <person name="Hiller R."/>
            <person name="Schmidt W."/>
            <person name="Lecharny A."/>
            <person name="Aubourg S."/>
            <person name="Chefdor F."/>
            <person name="Cooke R."/>
            <person name="Berger C."/>
            <person name="Monfort A."/>
            <person name="Casacuberta E."/>
            <person name="Gibbons T."/>
            <person name="Weber N."/>
            <person name="Vandenbol M."/>
            <person name="Bargues M."/>
            <person name="Terol J."/>
            <person name="Torres A."/>
            <person name="Perez-Perez A."/>
            <person name="Purnelle B."/>
            <person name="Bent E."/>
            <person name="Johnson S."/>
            <person name="Tacon D."/>
            <person name="Jesse T."/>
            <person name="Heijnen L."/>
            <person name="Schwarz S."/>
            <person name="Scholler P."/>
            <person name="Heber S."/>
            <person name="Francs P."/>
            <person name="Bielke C."/>
            <person name="Frishman D."/>
            <person name="Haase D."/>
            <person name="Lemcke K."/>
            <person name="Mewes H.-W."/>
            <person name="Stocker S."/>
            <person name="Zaccaria P."/>
            <person name="Bevan M."/>
            <person name="Wilson R.K."/>
            <person name="de la Bastide M."/>
            <person name="Habermann K."/>
            <person name="Parnell L."/>
            <person name="Dedhia N."/>
            <person name="Gnoj L."/>
            <person name="Schutz K."/>
            <person name="Huang E."/>
            <person name="Spiegel L."/>
            <person name="Sekhon M."/>
            <person name="Murray J."/>
            <person name="Sheet P."/>
            <person name="Cordes M."/>
            <person name="Abu-Threideh J."/>
            <person name="Stoneking T."/>
            <person name="Kalicki J."/>
            <person name="Graves T."/>
            <person name="Harmon G."/>
            <person name="Edwards J."/>
            <person name="Latreille P."/>
            <person name="Courtney L."/>
            <person name="Cloud J."/>
            <person name="Abbott A."/>
            <person name="Scott K."/>
            <person name="Johnson D."/>
            <person name="Minx P."/>
            <person name="Bentley D."/>
            <person name="Fulton B."/>
            <person name="Miller N."/>
            <person name="Greco T."/>
            <person name="Kemp K."/>
            <person name="Kramer J."/>
            <person name="Fulton L."/>
            <person name="Mardis E."/>
            <person name="Dante M."/>
            <person name="Pepin K."/>
            <person name="Hillier L.W."/>
            <person name="Nelson J."/>
            <person name="Spieth J."/>
            <person name="Ryan E."/>
            <person name="Andrews S."/>
            <person name="Geisel C."/>
            <person name="Layman D."/>
            <person name="Du H."/>
            <person name="Ali J."/>
            <person name="Berghoff A."/>
            <person name="Jones K."/>
            <person name="Drone K."/>
            <person name="Cotton M."/>
            <person name="Joshu C."/>
            <person name="Antonoiu B."/>
            <person name="Zidanic M."/>
            <person name="Strong C."/>
            <person name="Sun H."/>
            <person name="Lamar B."/>
            <person name="Yordan C."/>
            <person name="Ma P."/>
            <person name="Zhong J."/>
            <person name="Preston R."/>
            <person name="Vil D."/>
            <person name="Shekher M."/>
            <person name="Matero A."/>
            <person name="Shah R."/>
            <person name="Swaby I.K."/>
            <person name="O'Shaughnessy A."/>
            <person name="Rodriguez M."/>
            <person name="Hoffman J."/>
            <person name="Till S."/>
            <person name="Granat S."/>
            <person name="Shohdy N."/>
            <person name="Hasegawa A."/>
            <person name="Hameed A."/>
            <person name="Lodhi M."/>
            <person name="Johnson A."/>
            <person name="Chen E."/>
            <person name="Marra M.A."/>
            <person name="Martienssen R."/>
            <person name="McCombie W.R."/>
        </authorList>
    </citation>
    <scope>NUCLEOTIDE SEQUENCE [LARGE SCALE GENOMIC DNA]</scope>
    <source>
        <strain>cv. Columbia</strain>
    </source>
</reference>
<reference key="2">
    <citation type="journal article" date="2017" name="Plant J.">
        <title>Araport11: a complete reannotation of the Arabidopsis thaliana reference genome.</title>
        <authorList>
            <person name="Cheng C.Y."/>
            <person name="Krishnakumar V."/>
            <person name="Chan A.P."/>
            <person name="Thibaud-Nissen F."/>
            <person name="Schobel S."/>
            <person name="Town C.D."/>
        </authorList>
    </citation>
    <scope>GENOME REANNOTATION</scope>
    <source>
        <strain>cv. Columbia</strain>
    </source>
</reference>
<reference key="3">
    <citation type="journal article" date="2001" name="Plant Physiol.">
        <title>A superfamily of proteins with novel cysteine-rich repeats.</title>
        <authorList>
            <person name="Chen Z."/>
        </authorList>
    </citation>
    <scope>GENE FAMILY ORGANIZATION</scope>
    <scope>NOMENCLATURE</scope>
</reference>
<organism>
    <name type="scientific">Arabidopsis thaliana</name>
    <name type="common">Mouse-ear cress</name>
    <dbReference type="NCBI Taxonomy" id="3702"/>
    <lineage>
        <taxon>Eukaryota</taxon>
        <taxon>Viridiplantae</taxon>
        <taxon>Streptophyta</taxon>
        <taxon>Embryophyta</taxon>
        <taxon>Tracheophyta</taxon>
        <taxon>Spermatophyta</taxon>
        <taxon>Magnoliopsida</taxon>
        <taxon>eudicotyledons</taxon>
        <taxon>Gunneridae</taxon>
        <taxon>Pentapetalae</taxon>
        <taxon>rosids</taxon>
        <taxon>malvids</taxon>
        <taxon>Brassicales</taxon>
        <taxon>Brassicaceae</taxon>
        <taxon>Camelineae</taxon>
        <taxon>Arabidopsis</taxon>
    </lineage>
</organism>
<sequence length="256" mass="29018">MSSVFGSVHILAMIAIQLLLTHSVSSLNLTNAYLHHKCSNTQGKYKQGSAFEKNLNLVLSTITSIGNFRDGFRYTEEGEDPNNVFVMFQCRGDSYWSKCPPCISTAVSGLRRRCPRNKGAIIWYDQCLLKISSVASFNKIDYENDFYLSNPNNMSDRGLFNKETSALLEKLAYKASDRNNLDGKQLVLYAAGEKRIGTKKVYAMVQCTKDLIFTKCFECLEGILRKFPQCCDGKRGGRVFGTSCNFRYELYPFLRN</sequence>
<name>CRR51_ARATH</name>
<proteinExistence type="inferred from homology"/>
<protein>
    <recommendedName>
        <fullName>Cysteine-rich repeat secretory protein 51</fullName>
    </recommendedName>
</protein>
<accession>P0CJ58</accession>
<accession>F4JVK9</accession>
<accession>Q680R8</accession>
<accession>Q9S7J6</accession>
<accession>Q9SUM6</accession>